<comment type="function">
    <text evidence="1">Catalyzes the radical-mediated insertion of two sulfur atoms into the C-6 and C-8 positions of the octanoyl moiety bound to the lipoyl domains of lipoate-dependent enzymes, thereby converting the octanoylated domains into lipoylated derivatives.</text>
</comment>
<comment type="catalytic activity">
    <reaction evidence="1">
        <text>[[Fe-S] cluster scaffold protein carrying a second [4Fe-4S](2+) cluster] + N(6)-octanoyl-L-lysyl-[protein] + 2 oxidized [2Fe-2S]-[ferredoxin] + 2 S-adenosyl-L-methionine + 4 H(+) = [[Fe-S] cluster scaffold protein] + N(6)-[(R)-dihydrolipoyl]-L-lysyl-[protein] + 4 Fe(3+) + 2 hydrogen sulfide + 2 5'-deoxyadenosine + 2 L-methionine + 2 reduced [2Fe-2S]-[ferredoxin]</text>
        <dbReference type="Rhea" id="RHEA:16585"/>
        <dbReference type="Rhea" id="RHEA-COMP:9928"/>
        <dbReference type="Rhea" id="RHEA-COMP:10000"/>
        <dbReference type="Rhea" id="RHEA-COMP:10001"/>
        <dbReference type="Rhea" id="RHEA-COMP:10475"/>
        <dbReference type="Rhea" id="RHEA-COMP:14568"/>
        <dbReference type="Rhea" id="RHEA-COMP:14569"/>
        <dbReference type="ChEBI" id="CHEBI:15378"/>
        <dbReference type="ChEBI" id="CHEBI:17319"/>
        <dbReference type="ChEBI" id="CHEBI:29034"/>
        <dbReference type="ChEBI" id="CHEBI:29919"/>
        <dbReference type="ChEBI" id="CHEBI:33722"/>
        <dbReference type="ChEBI" id="CHEBI:33737"/>
        <dbReference type="ChEBI" id="CHEBI:33738"/>
        <dbReference type="ChEBI" id="CHEBI:57844"/>
        <dbReference type="ChEBI" id="CHEBI:59789"/>
        <dbReference type="ChEBI" id="CHEBI:78809"/>
        <dbReference type="ChEBI" id="CHEBI:83100"/>
        <dbReference type="EC" id="2.8.1.8"/>
    </reaction>
</comment>
<comment type="cofactor">
    <cofactor evidence="1">
        <name>[4Fe-4S] cluster</name>
        <dbReference type="ChEBI" id="CHEBI:49883"/>
    </cofactor>
    <text evidence="1">Binds 2 [4Fe-4S] clusters per subunit. One cluster is coordinated with 3 cysteines and an exchangeable S-adenosyl-L-methionine.</text>
</comment>
<comment type="pathway">
    <text evidence="1">Protein modification; protein lipoylation via endogenous pathway; protein N(6)-(lipoyl)lysine from octanoyl-[acyl-carrier-protein]: step 2/2.</text>
</comment>
<comment type="subcellular location">
    <subcellularLocation>
        <location evidence="1">Cytoplasm</location>
    </subcellularLocation>
</comment>
<comment type="similarity">
    <text evidence="1">Belongs to the radical SAM superfamily. Lipoyl synthase family.</text>
</comment>
<proteinExistence type="inferred from homology"/>
<protein>
    <recommendedName>
        <fullName evidence="1">Lipoyl synthase</fullName>
        <ecNumber evidence="1">2.8.1.8</ecNumber>
    </recommendedName>
    <alternativeName>
        <fullName evidence="1">Lip-syn</fullName>
        <shortName evidence="1">LS</shortName>
    </alternativeName>
    <alternativeName>
        <fullName evidence="1">Lipoate synthase</fullName>
    </alternativeName>
    <alternativeName>
        <fullName evidence="1">Lipoic acid synthase</fullName>
    </alternativeName>
    <alternativeName>
        <fullName evidence="1">Sulfur insertion protein LipA</fullName>
    </alternativeName>
</protein>
<organism>
    <name type="scientific">Legionella pneumophila (strain Corby)</name>
    <dbReference type="NCBI Taxonomy" id="400673"/>
    <lineage>
        <taxon>Bacteria</taxon>
        <taxon>Pseudomonadati</taxon>
        <taxon>Pseudomonadota</taxon>
        <taxon>Gammaproteobacteria</taxon>
        <taxon>Legionellales</taxon>
        <taxon>Legionellaceae</taxon>
        <taxon>Legionella</taxon>
    </lineage>
</organism>
<feature type="chain" id="PRO_0000325267" description="Lipoyl synthase">
    <location>
        <begin position="1"/>
        <end position="329"/>
    </location>
</feature>
<feature type="domain" description="Radical SAM core" evidence="2">
    <location>
        <begin position="83"/>
        <end position="303"/>
    </location>
</feature>
<feature type="binding site" evidence="1">
    <location>
        <position position="72"/>
    </location>
    <ligand>
        <name>[4Fe-4S] cluster</name>
        <dbReference type="ChEBI" id="CHEBI:49883"/>
        <label>1</label>
    </ligand>
</feature>
<feature type="binding site" evidence="1">
    <location>
        <position position="77"/>
    </location>
    <ligand>
        <name>[4Fe-4S] cluster</name>
        <dbReference type="ChEBI" id="CHEBI:49883"/>
        <label>1</label>
    </ligand>
</feature>
<feature type="binding site" evidence="1">
    <location>
        <position position="83"/>
    </location>
    <ligand>
        <name>[4Fe-4S] cluster</name>
        <dbReference type="ChEBI" id="CHEBI:49883"/>
        <label>1</label>
    </ligand>
</feature>
<feature type="binding site" evidence="1">
    <location>
        <position position="98"/>
    </location>
    <ligand>
        <name>[4Fe-4S] cluster</name>
        <dbReference type="ChEBI" id="CHEBI:49883"/>
        <label>2</label>
        <note>4Fe-4S-S-AdoMet</note>
    </ligand>
</feature>
<feature type="binding site" evidence="1">
    <location>
        <position position="102"/>
    </location>
    <ligand>
        <name>[4Fe-4S] cluster</name>
        <dbReference type="ChEBI" id="CHEBI:49883"/>
        <label>2</label>
        <note>4Fe-4S-S-AdoMet</note>
    </ligand>
</feature>
<feature type="binding site" evidence="1">
    <location>
        <position position="105"/>
    </location>
    <ligand>
        <name>[4Fe-4S] cluster</name>
        <dbReference type="ChEBI" id="CHEBI:49883"/>
        <label>2</label>
        <note>4Fe-4S-S-AdoMet</note>
    </ligand>
</feature>
<feature type="binding site" evidence="1">
    <location>
        <position position="313"/>
    </location>
    <ligand>
        <name>[4Fe-4S] cluster</name>
        <dbReference type="ChEBI" id="CHEBI:49883"/>
        <label>1</label>
    </ligand>
</feature>
<sequence length="329" mass="36770">MGKLIDIPIVVESGQKYKTSQGVTAIKDGIKSSGQDHERLPKPKWLRIVNHTTPAYSQVKEQVQKHRLATVCEEAKCPNISECWSHGTATIMLMGAVCTRACRFCSVDTGNPHGWLDAEEPENTAETVALMNLDYVVLTSVNRDDLPDGGANHYAKTIRAIKKRSPRTKVEALTPDFQGSERDVAVLLDSGVDVFAQNVETVERLTHPVRDNRAGYQQTLNVLAFAKKYRPDVLTKTSLMLGLGETDEEIIRTMDDLRTHHVDILTLGQYLQPTKNHLPIARYVTPETFSELRQIGLKKGFFEVASGPLVRSSYRADRVFKRDNLGLDV</sequence>
<gene>
    <name evidence="1" type="primary">lipA</name>
    <name type="ordered locus">LPC_2548</name>
</gene>
<reference key="1">
    <citation type="submission" date="2006-11" db="EMBL/GenBank/DDBJ databases">
        <title>Identification and characterization of a new conjugation/ type IVA secretion system (trb/tra) of L. pneumophila Corby localized on a mobile genomic island.</title>
        <authorList>
            <person name="Gloeckner G."/>
            <person name="Albert-Weissenberger C."/>
            <person name="Weinmann E."/>
            <person name="Jacobi S."/>
            <person name="Schunder E."/>
            <person name="Steinert M."/>
            <person name="Buchrieser C."/>
            <person name="Hacker J."/>
            <person name="Heuner K."/>
        </authorList>
    </citation>
    <scope>NUCLEOTIDE SEQUENCE [LARGE SCALE GENOMIC DNA]</scope>
    <source>
        <strain>Corby</strain>
    </source>
</reference>
<dbReference type="EC" id="2.8.1.8" evidence="1"/>
<dbReference type="EMBL" id="CP000675">
    <property type="protein sequence ID" value="ABQ56463.1"/>
    <property type="molecule type" value="Genomic_DNA"/>
</dbReference>
<dbReference type="RefSeq" id="WP_011945885.1">
    <property type="nucleotide sequence ID" value="NC_009494.2"/>
</dbReference>
<dbReference type="SMR" id="A5IGG3"/>
<dbReference type="KEGG" id="lpc:LPC_2548"/>
<dbReference type="HOGENOM" id="CLU_033144_2_0_6"/>
<dbReference type="UniPathway" id="UPA00538">
    <property type="reaction ID" value="UER00593"/>
</dbReference>
<dbReference type="GO" id="GO:0005737">
    <property type="term" value="C:cytoplasm"/>
    <property type="evidence" value="ECO:0007669"/>
    <property type="project" value="UniProtKB-SubCell"/>
</dbReference>
<dbReference type="GO" id="GO:0051539">
    <property type="term" value="F:4 iron, 4 sulfur cluster binding"/>
    <property type="evidence" value="ECO:0007669"/>
    <property type="project" value="UniProtKB-UniRule"/>
</dbReference>
<dbReference type="GO" id="GO:0016992">
    <property type="term" value="F:lipoate synthase activity"/>
    <property type="evidence" value="ECO:0007669"/>
    <property type="project" value="UniProtKB-UniRule"/>
</dbReference>
<dbReference type="GO" id="GO:0046872">
    <property type="term" value="F:metal ion binding"/>
    <property type="evidence" value="ECO:0007669"/>
    <property type="project" value="UniProtKB-KW"/>
</dbReference>
<dbReference type="CDD" id="cd01335">
    <property type="entry name" value="Radical_SAM"/>
    <property type="match status" value="1"/>
</dbReference>
<dbReference type="FunFam" id="3.20.20.70:FF:000040">
    <property type="entry name" value="Lipoyl synthase"/>
    <property type="match status" value="1"/>
</dbReference>
<dbReference type="Gene3D" id="3.20.20.70">
    <property type="entry name" value="Aldolase class I"/>
    <property type="match status" value="1"/>
</dbReference>
<dbReference type="HAMAP" id="MF_00206">
    <property type="entry name" value="Lipoyl_synth"/>
    <property type="match status" value="1"/>
</dbReference>
<dbReference type="InterPro" id="IPR013785">
    <property type="entry name" value="Aldolase_TIM"/>
</dbReference>
<dbReference type="InterPro" id="IPR006638">
    <property type="entry name" value="Elp3/MiaA/NifB-like_rSAM"/>
</dbReference>
<dbReference type="InterPro" id="IPR003698">
    <property type="entry name" value="Lipoyl_synth"/>
</dbReference>
<dbReference type="InterPro" id="IPR007197">
    <property type="entry name" value="rSAM"/>
</dbReference>
<dbReference type="NCBIfam" id="TIGR00510">
    <property type="entry name" value="lipA"/>
    <property type="match status" value="1"/>
</dbReference>
<dbReference type="NCBIfam" id="NF004019">
    <property type="entry name" value="PRK05481.1"/>
    <property type="match status" value="1"/>
</dbReference>
<dbReference type="NCBIfam" id="NF009544">
    <property type="entry name" value="PRK12928.1"/>
    <property type="match status" value="1"/>
</dbReference>
<dbReference type="PANTHER" id="PTHR10949">
    <property type="entry name" value="LIPOYL SYNTHASE"/>
    <property type="match status" value="1"/>
</dbReference>
<dbReference type="PANTHER" id="PTHR10949:SF0">
    <property type="entry name" value="LIPOYL SYNTHASE, MITOCHONDRIAL"/>
    <property type="match status" value="1"/>
</dbReference>
<dbReference type="Pfam" id="PF04055">
    <property type="entry name" value="Radical_SAM"/>
    <property type="match status" value="1"/>
</dbReference>
<dbReference type="PIRSF" id="PIRSF005963">
    <property type="entry name" value="Lipoyl_synth"/>
    <property type="match status" value="1"/>
</dbReference>
<dbReference type="SFLD" id="SFLDF00271">
    <property type="entry name" value="lipoyl_synthase"/>
    <property type="match status" value="1"/>
</dbReference>
<dbReference type="SFLD" id="SFLDS00029">
    <property type="entry name" value="Radical_SAM"/>
    <property type="match status" value="1"/>
</dbReference>
<dbReference type="SMART" id="SM00729">
    <property type="entry name" value="Elp3"/>
    <property type="match status" value="1"/>
</dbReference>
<dbReference type="SUPFAM" id="SSF102114">
    <property type="entry name" value="Radical SAM enzymes"/>
    <property type="match status" value="1"/>
</dbReference>
<dbReference type="PROSITE" id="PS51918">
    <property type="entry name" value="RADICAL_SAM"/>
    <property type="match status" value="1"/>
</dbReference>
<accession>A5IGG3</accession>
<name>LIPA_LEGPC</name>
<keyword id="KW-0004">4Fe-4S</keyword>
<keyword id="KW-0963">Cytoplasm</keyword>
<keyword id="KW-0408">Iron</keyword>
<keyword id="KW-0411">Iron-sulfur</keyword>
<keyword id="KW-0479">Metal-binding</keyword>
<keyword id="KW-0949">S-adenosyl-L-methionine</keyword>
<keyword id="KW-0808">Transferase</keyword>
<evidence type="ECO:0000255" key="1">
    <source>
        <dbReference type="HAMAP-Rule" id="MF_00206"/>
    </source>
</evidence>
<evidence type="ECO:0000255" key="2">
    <source>
        <dbReference type="PROSITE-ProRule" id="PRU01266"/>
    </source>
</evidence>